<accession>Q8Y6J9</accession>
<comment type="catalytic activity">
    <reaction evidence="1">
        <text>(S)-4-amino-5-oxopentanoate = 5-aminolevulinate</text>
        <dbReference type="Rhea" id="RHEA:14265"/>
        <dbReference type="ChEBI" id="CHEBI:57501"/>
        <dbReference type="ChEBI" id="CHEBI:356416"/>
        <dbReference type="EC" id="5.4.3.8"/>
    </reaction>
</comment>
<comment type="cofactor">
    <cofactor evidence="1">
        <name>pyridoxal 5'-phosphate</name>
        <dbReference type="ChEBI" id="CHEBI:597326"/>
    </cofactor>
</comment>
<comment type="pathway">
    <text evidence="1">Porphyrin-containing compound metabolism; protoporphyrin-IX biosynthesis; 5-aminolevulinate from L-glutamyl-tRNA(Glu): step 2/2.</text>
</comment>
<comment type="subunit">
    <text evidence="1">Homodimer.</text>
</comment>
<comment type="subcellular location">
    <subcellularLocation>
        <location evidence="1">Cytoplasm</location>
    </subcellularLocation>
</comment>
<comment type="similarity">
    <text evidence="1">Belongs to the class-III pyridoxal-phosphate-dependent aminotransferase family. HemL subfamily.</text>
</comment>
<feature type="chain" id="PRO_0000120422" description="Glutamate-1-semialdehyde 2,1-aminomutase 2">
    <location>
        <begin position="1"/>
        <end position="432"/>
    </location>
</feature>
<feature type="modified residue" description="N6-(pyridoxal phosphate)lysine" evidence="1">
    <location>
        <position position="268"/>
    </location>
</feature>
<protein>
    <recommendedName>
        <fullName evidence="1">Glutamate-1-semialdehyde 2,1-aminomutase 2</fullName>
        <shortName evidence="1">GSA 2</shortName>
        <ecNumber evidence="1">5.4.3.8</ecNumber>
    </recommendedName>
    <alternativeName>
        <fullName evidence="1">Glutamate-1-semialdehyde aminotransferase 2</fullName>
        <shortName evidence="1">GSA-AT 2</shortName>
    </alternativeName>
</protein>
<name>GSA2_LISMO</name>
<keyword id="KW-0963">Cytoplasm</keyword>
<keyword id="KW-0413">Isomerase</keyword>
<keyword id="KW-0627">Porphyrin biosynthesis</keyword>
<keyword id="KW-0663">Pyridoxal phosphate</keyword>
<keyword id="KW-1185">Reference proteome</keyword>
<evidence type="ECO:0000255" key="1">
    <source>
        <dbReference type="HAMAP-Rule" id="MF_00375"/>
    </source>
</evidence>
<proteinExistence type="inferred from homology"/>
<dbReference type="EC" id="5.4.3.8" evidence="1"/>
<dbReference type="EMBL" id="AL591980">
    <property type="protein sequence ID" value="CAC99763.1"/>
    <property type="molecule type" value="Genomic_DNA"/>
</dbReference>
<dbReference type="PIR" id="AE1285">
    <property type="entry name" value="AE1285"/>
</dbReference>
<dbReference type="RefSeq" id="NP_465210.1">
    <property type="nucleotide sequence ID" value="NC_003210.1"/>
</dbReference>
<dbReference type="RefSeq" id="WP_010989786.1">
    <property type="nucleotide sequence ID" value="NZ_CP149495.1"/>
</dbReference>
<dbReference type="SMR" id="Q8Y6J9"/>
<dbReference type="STRING" id="169963.gene:17594366"/>
<dbReference type="PaxDb" id="169963-lmo1685"/>
<dbReference type="EnsemblBacteria" id="CAC99763">
    <property type="protein sequence ID" value="CAC99763"/>
    <property type="gene ID" value="CAC99763"/>
</dbReference>
<dbReference type="GeneID" id="985629"/>
<dbReference type="KEGG" id="lmo:lmo1685"/>
<dbReference type="PATRIC" id="fig|169963.11.peg.1728"/>
<dbReference type="eggNOG" id="COG0001">
    <property type="taxonomic scope" value="Bacteria"/>
</dbReference>
<dbReference type="HOGENOM" id="CLU_016922_1_5_9"/>
<dbReference type="OrthoDB" id="9807885at2"/>
<dbReference type="PhylomeDB" id="Q8Y6J9"/>
<dbReference type="BioCyc" id="LMON169963:LMO1685-MONOMER"/>
<dbReference type="UniPathway" id="UPA00251">
    <property type="reaction ID" value="UER00317"/>
</dbReference>
<dbReference type="Proteomes" id="UP000000817">
    <property type="component" value="Chromosome"/>
</dbReference>
<dbReference type="GO" id="GO:0005737">
    <property type="term" value="C:cytoplasm"/>
    <property type="evidence" value="ECO:0007669"/>
    <property type="project" value="UniProtKB-SubCell"/>
</dbReference>
<dbReference type="GO" id="GO:0042286">
    <property type="term" value="F:glutamate-1-semialdehyde 2,1-aminomutase activity"/>
    <property type="evidence" value="ECO:0007669"/>
    <property type="project" value="UniProtKB-UniRule"/>
</dbReference>
<dbReference type="GO" id="GO:0030170">
    <property type="term" value="F:pyridoxal phosphate binding"/>
    <property type="evidence" value="ECO:0007669"/>
    <property type="project" value="InterPro"/>
</dbReference>
<dbReference type="GO" id="GO:0008483">
    <property type="term" value="F:transaminase activity"/>
    <property type="evidence" value="ECO:0007669"/>
    <property type="project" value="InterPro"/>
</dbReference>
<dbReference type="GO" id="GO:0006782">
    <property type="term" value="P:protoporphyrinogen IX biosynthetic process"/>
    <property type="evidence" value="ECO:0007669"/>
    <property type="project" value="UniProtKB-UniRule"/>
</dbReference>
<dbReference type="CDD" id="cd00610">
    <property type="entry name" value="OAT_like"/>
    <property type="match status" value="1"/>
</dbReference>
<dbReference type="FunFam" id="3.40.640.10:FF:000021">
    <property type="entry name" value="Glutamate-1-semialdehyde 2,1-aminomutase"/>
    <property type="match status" value="1"/>
</dbReference>
<dbReference type="Gene3D" id="3.90.1150.10">
    <property type="entry name" value="Aspartate Aminotransferase, domain 1"/>
    <property type="match status" value="1"/>
</dbReference>
<dbReference type="Gene3D" id="3.40.640.10">
    <property type="entry name" value="Type I PLP-dependent aspartate aminotransferase-like (Major domain)"/>
    <property type="match status" value="1"/>
</dbReference>
<dbReference type="HAMAP" id="MF_00375">
    <property type="entry name" value="HemL_aminotrans_3"/>
    <property type="match status" value="1"/>
</dbReference>
<dbReference type="InterPro" id="IPR004639">
    <property type="entry name" value="4pyrrol_synth_GluAld_NH2Trfase"/>
</dbReference>
<dbReference type="InterPro" id="IPR005814">
    <property type="entry name" value="Aminotrans_3"/>
</dbReference>
<dbReference type="InterPro" id="IPR049704">
    <property type="entry name" value="Aminotrans_3_PPA_site"/>
</dbReference>
<dbReference type="InterPro" id="IPR015424">
    <property type="entry name" value="PyrdxlP-dep_Trfase"/>
</dbReference>
<dbReference type="InterPro" id="IPR015421">
    <property type="entry name" value="PyrdxlP-dep_Trfase_major"/>
</dbReference>
<dbReference type="InterPro" id="IPR015422">
    <property type="entry name" value="PyrdxlP-dep_Trfase_small"/>
</dbReference>
<dbReference type="NCBIfam" id="TIGR00713">
    <property type="entry name" value="hemL"/>
    <property type="match status" value="1"/>
</dbReference>
<dbReference type="NCBIfam" id="NF000818">
    <property type="entry name" value="PRK00062.1"/>
    <property type="match status" value="1"/>
</dbReference>
<dbReference type="NCBIfam" id="NF009055">
    <property type="entry name" value="PRK12389.1"/>
    <property type="match status" value="1"/>
</dbReference>
<dbReference type="PANTHER" id="PTHR43713">
    <property type="entry name" value="GLUTAMATE-1-SEMIALDEHYDE 2,1-AMINOMUTASE"/>
    <property type="match status" value="1"/>
</dbReference>
<dbReference type="PANTHER" id="PTHR43713:SF1">
    <property type="entry name" value="GLUTAMATE-1-SEMIALDEHYDE 2,1-AMINOMUTASE 2"/>
    <property type="match status" value="1"/>
</dbReference>
<dbReference type="Pfam" id="PF00202">
    <property type="entry name" value="Aminotran_3"/>
    <property type="match status" value="1"/>
</dbReference>
<dbReference type="SUPFAM" id="SSF53383">
    <property type="entry name" value="PLP-dependent transferases"/>
    <property type="match status" value="1"/>
</dbReference>
<dbReference type="PROSITE" id="PS00600">
    <property type="entry name" value="AA_TRANSFER_CLASS_3"/>
    <property type="match status" value="1"/>
</dbReference>
<sequence length="432" mass="46101">MDHSMSKKLHDEALLHIVGGVNSPSRSNKGVGGGIPVTMERASGAYFYDVDGNKYIDYLAAFGPIITGHAHPHITEAITKAAQNGVLYGTPTKHEITFAKMLKEAIPSLEKVRFTNSGTEAVMTTIRVARAYTGRDKIIKFAGCYHGHFDLVLVEAGSGPSTLGIPDSAGVTKSTAEEVITVPFNDLDSFKEALAIWGDQVAAVLVEPIVGNFGMVAPEDGFLEAVNELAHVNGSLVIYDEVITAFRFMYGGAQNYLGVIPDLTAMGKIIGGGLPIGAYGGRIDIMEKVAPLGPAYQAGTHAGNPASILSGIACLEVLQEEGLYERFEKYGSMLKDGIEKAAAKHNIAVTVNQIVGALTVYFTEDPVTNYAEAGATNGELFGRFFKGMLEEGINLAPSKYEAWFITSAHSEADILETIQAVDTVFGKMVQDN</sequence>
<organism>
    <name type="scientific">Listeria monocytogenes serovar 1/2a (strain ATCC BAA-679 / EGD-e)</name>
    <dbReference type="NCBI Taxonomy" id="169963"/>
    <lineage>
        <taxon>Bacteria</taxon>
        <taxon>Bacillati</taxon>
        <taxon>Bacillota</taxon>
        <taxon>Bacilli</taxon>
        <taxon>Bacillales</taxon>
        <taxon>Listeriaceae</taxon>
        <taxon>Listeria</taxon>
    </lineage>
</organism>
<gene>
    <name evidence="1" type="primary">hemL2</name>
    <name type="synonym">gsaB</name>
    <name type="ordered locus">lmo1685</name>
</gene>
<reference key="1">
    <citation type="journal article" date="2001" name="Science">
        <title>Comparative genomics of Listeria species.</title>
        <authorList>
            <person name="Glaser P."/>
            <person name="Frangeul L."/>
            <person name="Buchrieser C."/>
            <person name="Rusniok C."/>
            <person name="Amend A."/>
            <person name="Baquero F."/>
            <person name="Berche P."/>
            <person name="Bloecker H."/>
            <person name="Brandt P."/>
            <person name="Chakraborty T."/>
            <person name="Charbit A."/>
            <person name="Chetouani F."/>
            <person name="Couve E."/>
            <person name="de Daruvar A."/>
            <person name="Dehoux P."/>
            <person name="Domann E."/>
            <person name="Dominguez-Bernal G."/>
            <person name="Duchaud E."/>
            <person name="Durant L."/>
            <person name="Dussurget O."/>
            <person name="Entian K.-D."/>
            <person name="Fsihi H."/>
            <person name="Garcia-del Portillo F."/>
            <person name="Garrido P."/>
            <person name="Gautier L."/>
            <person name="Goebel W."/>
            <person name="Gomez-Lopez N."/>
            <person name="Hain T."/>
            <person name="Hauf J."/>
            <person name="Jackson D."/>
            <person name="Jones L.-M."/>
            <person name="Kaerst U."/>
            <person name="Kreft J."/>
            <person name="Kuhn M."/>
            <person name="Kunst F."/>
            <person name="Kurapkat G."/>
            <person name="Madueno E."/>
            <person name="Maitournam A."/>
            <person name="Mata Vicente J."/>
            <person name="Ng E."/>
            <person name="Nedjari H."/>
            <person name="Nordsiek G."/>
            <person name="Novella S."/>
            <person name="de Pablos B."/>
            <person name="Perez-Diaz J.-C."/>
            <person name="Purcell R."/>
            <person name="Remmel B."/>
            <person name="Rose M."/>
            <person name="Schlueter T."/>
            <person name="Simoes N."/>
            <person name="Tierrez A."/>
            <person name="Vazquez-Boland J.-A."/>
            <person name="Voss H."/>
            <person name="Wehland J."/>
            <person name="Cossart P."/>
        </authorList>
    </citation>
    <scope>NUCLEOTIDE SEQUENCE [LARGE SCALE GENOMIC DNA]</scope>
    <source>
        <strain>ATCC BAA-679 / EGD-e</strain>
    </source>
</reference>